<keyword id="KW-0963">Cytoplasm</keyword>
<keyword id="KW-0903">Direct protein sequencing</keyword>
<keyword id="KW-0378">Hydrolase</keyword>
<keyword id="KW-0511">Multifunctional enzyme</keyword>
<keyword id="KW-0658">Purine biosynthesis</keyword>
<keyword id="KW-1185">Reference proteome</keyword>
<keyword id="KW-0808">Transferase</keyword>
<name>PUR92_YEAST</name>
<evidence type="ECO:0000250" key="1">
    <source>
        <dbReference type="UniProtKB" id="P31335"/>
    </source>
</evidence>
<evidence type="ECO:0000250" key="2">
    <source>
        <dbReference type="UniProtKB" id="P31939"/>
    </source>
</evidence>
<evidence type="ECO:0000255" key="3">
    <source>
        <dbReference type="PROSITE-ProRule" id="PRU01202"/>
    </source>
</evidence>
<evidence type="ECO:0000269" key="4">
    <source>
    </source>
</evidence>
<evidence type="ECO:0000269" key="5">
    <source>
    </source>
</evidence>
<evidence type="ECO:0000269" key="6">
    <source>
    </source>
</evidence>
<evidence type="ECO:0000303" key="7">
    <source>
    </source>
</evidence>
<evidence type="ECO:0000303" key="8">
    <source>
    </source>
</evidence>
<evidence type="ECO:0000305" key="9"/>
<evidence type="ECO:0000305" key="10">
    <source>
    </source>
</evidence>
<evidence type="ECO:0000305" key="11">
    <source>
    </source>
</evidence>
<comment type="function">
    <text evidence="4 6">Bifunctional enzyme that catalyzes the last two steps of purine biosynthesis (PubMed:10877846, PubMed:9143321). Acts as a transformylase that incorporates a formyl group to the AMP analog AICAR (5-amino-1-(5-phospho-beta-D-ribosyl)imidazole-4-carboxamide) to produce the intermediate formyl-AICAR (FAICAR) (PubMed:10877846, PubMed:9143321). Also catalyzes the cyclization of FAICAR to IMP (PubMed:10877846, PubMed:9143321).</text>
</comment>
<comment type="catalytic activity">
    <reaction evidence="4 10 11">
        <text>(6R)-10-formyltetrahydrofolate + 5-amino-1-(5-phospho-beta-D-ribosyl)imidazole-4-carboxamide = 5-formamido-1-(5-phospho-D-ribosyl)imidazole-4-carboxamide + (6S)-5,6,7,8-tetrahydrofolate</text>
        <dbReference type="Rhea" id="RHEA:22192"/>
        <dbReference type="ChEBI" id="CHEBI:57453"/>
        <dbReference type="ChEBI" id="CHEBI:58467"/>
        <dbReference type="ChEBI" id="CHEBI:58475"/>
        <dbReference type="ChEBI" id="CHEBI:195366"/>
        <dbReference type="EC" id="2.1.2.3"/>
    </reaction>
</comment>
<comment type="catalytic activity">
    <reaction evidence="4 11">
        <text>IMP + H2O = 5-formamido-1-(5-phospho-D-ribosyl)imidazole-4-carboxamide</text>
        <dbReference type="Rhea" id="RHEA:18445"/>
        <dbReference type="ChEBI" id="CHEBI:15377"/>
        <dbReference type="ChEBI" id="CHEBI:58053"/>
        <dbReference type="ChEBI" id="CHEBI:58467"/>
        <dbReference type="EC" id="3.5.4.10"/>
    </reaction>
</comment>
<comment type="biophysicochemical properties">
    <kinetics>
        <KM evidence="4">22 uM for 5-amino-1-(5-phospho-beta-D-ribosyl)imidazole-4-carboxamide (with (6S)-10-formyltetrahydrofolate as cosubstrate) (at pH 7.4)</KM>
        <KM evidence="4">63 uM for (6S)-10-formyltetrahydrofolate (with 5-amino-1-(5-phospho-beta-D-ribosyl)imidazole-4-carboxamide as cosubstrate) (at pH 7.4)</KM>
    </kinetics>
</comment>
<comment type="pathway">
    <text evidence="4 6">Purine metabolism; IMP biosynthesis via de novo pathway; 5-formamido-1-(5-phospho-D-ribosyl)imidazole-4-carboxamide from 5-amino-1-(5-phospho-D-ribosyl)imidazole-4-carboxamide (10-formyl THF route): step 1/1.</text>
</comment>
<comment type="pathway">
    <text evidence="4 6">Purine metabolism; IMP biosynthesis via de novo pathway; IMP from 5-formamido-1-(5-phospho-D-ribosyl)imidazole-4-carboxamide: step 1/1.</text>
</comment>
<comment type="subunit">
    <text evidence="4">Homodimer.</text>
</comment>
<comment type="interaction">
    <interactant intactId="EBI-14223">
        <id>P38009</id>
    </interactant>
    <interactant intactId="EBI-14213">
        <id>P54113</id>
        <label>ADE16</label>
    </interactant>
    <organismsDiffer>false</organismsDiffer>
    <experiments>6</experiments>
</comment>
<comment type="interaction">
    <interactant intactId="EBI-14223">
        <id>P38009</id>
    </interactant>
    <interactant intactId="EBI-17675">
        <id>P50278</id>
        <label>SOL1</label>
    </interactant>
    <organismsDiffer>false</organismsDiffer>
    <experiments>2</experiments>
</comment>
<comment type="subcellular location">
    <subcellularLocation>
        <location evidence="4">Cytoplasm</location>
        <location evidence="4">Cytosol</location>
    </subcellularLocation>
</comment>
<comment type="induction">
    <text evidence="4">Repressed by adenine (PubMed:10877846). Not induced during growth on the non-fermentable carbon source glycerol with ethanol (PubMed:10877846).</text>
</comment>
<comment type="domain">
    <text evidence="2">The IMP cyclohydrolase activity resides in the N-terminal region.</text>
</comment>
<comment type="disruption phenotype">
    <text evidence="4 6">Simultaneous knockout of ADE16 leads to adenine and histidine auxotrophy.</text>
</comment>
<comment type="miscellaneous">
    <text evidence="5">Present with 60900 molecules/cell in log phase SD medium.</text>
</comment>
<comment type="similarity">
    <text evidence="9">Belongs to the PurH family.</text>
</comment>
<accession>P38009</accession>
<accession>D6VZU3</accession>
<organism>
    <name type="scientific">Saccharomyces cerevisiae (strain ATCC 204508 / S288c)</name>
    <name type="common">Baker's yeast</name>
    <dbReference type="NCBI Taxonomy" id="559292"/>
    <lineage>
        <taxon>Eukaryota</taxon>
        <taxon>Fungi</taxon>
        <taxon>Dikarya</taxon>
        <taxon>Ascomycota</taxon>
        <taxon>Saccharomycotina</taxon>
        <taxon>Saccharomycetes</taxon>
        <taxon>Saccharomycetales</taxon>
        <taxon>Saccharomycetaceae</taxon>
        <taxon>Saccharomyces</taxon>
    </lineage>
</organism>
<feature type="chain" id="PRO_0000192160" description="Bifunctional purine biosynthesis protein ADE17">
    <location>
        <begin position="1"/>
        <end position="592"/>
    </location>
</feature>
<feature type="domain" description="MGS-like" evidence="3">
    <location>
        <begin position="1"/>
        <end position="147"/>
    </location>
</feature>
<feature type="active site" description="Proton donor/acceptor; for FAICAR cyclization activity" evidence="2">
    <location>
        <position position="138"/>
    </location>
</feature>
<feature type="active site" description="Proton acceptor; for AICAR formyltransferase activity" evidence="2">
    <location>
        <position position="267"/>
    </location>
</feature>
<feature type="binding site" evidence="2">
    <location>
        <begin position="35"/>
        <end position="38"/>
    </location>
    <ligand>
        <name>IMP</name>
        <dbReference type="ChEBI" id="CHEBI:58053"/>
    </ligand>
</feature>
<feature type="binding site" evidence="2">
    <location>
        <begin position="65"/>
        <end position="68"/>
    </location>
    <ligand>
        <name>IMP</name>
        <dbReference type="ChEBI" id="CHEBI:58053"/>
    </ligand>
</feature>
<feature type="binding site" evidence="2">
    <location>
        <begin position="102"/>
        <end position="103"/>
    </location>
    <ligand>
        <name>IMP</name>
        <dbReference type="ChEBI" id="CHEBI:58053"/>
    </ligand>
</feature>
<feature type="binding site" evidence="2">
    <location>
        <begin position="126"/>
        <end position="127"/>
    </location>
    <ligand>
        <name>IMP</name>
        <dbReference type="ChEBI" id="CHEBI:58053"/>
    </ligand>
</feature>
<feature type="binding site" description="in other chain" evidence="2">
    <location>
        <begin position="206"/>
        <end position="207"/>
    </location>
    <ligand>
        <name>5-amino-1-(5-phospho-beta-D-ribosyl)imidazole-4-carboxamide</name>
        <dbReference type="ChEBI" id="CHEBI:58475"/>
        <note>ligand shared between dimeric partners</note>
    </ligand>
</feature>
<feature type="binding site" description="in other chain" evidence="2">
    <location>
        <position position="267"/>
    </location>
    <ligand>
        <name>5-amino-1-(5-phospho-beta-D-ribosyl)imidazole-4-carboxamide</name>
        <dbReference type="ChEBI" id="CHEBI:58475"/>
        <note>ligand shared between dimeric partners</note>
    </ligand>
</feature>
<feature type="binding site" description="in other chain" evidence="2">
    <location>
        <position position="315"/>
    </location>
    <ligand>
        <name>5-amino-1-(5-phospho-beta-D-ribosyl)imidazole-4-carboxamide</name>
        <dbReference type="ChEBI" id="CHEBI:58475"/>
        <note>ligand shared between dimeric partners</note>
    </ligand>
</feature>
<feature type="binding site" description="in other chain" evidence="2">
    <location>
        <position position="338"/>
    </location>
    <ligand>
        <name>5-amino-1-(5-phospho-beta-D-ribosyl)imidazole-4-carboxamide</name>
        <dbReference type="ChEBI" id="CHEBI:58475"/>
        <note>ligand shared between dimeric partners</note>
    </ligand>
</feature>
<feature type="binding site" evidence="2">
    <location>
        <position position="430"/>
    </location>
    <ligand>
        <name>5-amino-1-(5-phospho-beta-D-ribosyl)imidazole-4-carboxamide</name>
        <dbReference type="ChEBI" id="CHEBI:58475"/>
        <note>ligand shared between dimeric partners</note>
    </ligand>
</feature>
<feature type="binding site" evidence="2">
    <location>
        <position position="450"/>
    </location>
    <ligand>
        <name>5-amino-1-(5-phospho-beta-D-ribosyl)imidazole-4-carboxamide</name>
        <dbReference type="ChEBI" id="CHEBI:58475"/>
        <note>ligand shared between dimeric partners</note>
    </ligand>
</feature>
<feature type="binding site" evidence="1">
    <location>
        <position position="451"/>
    </location>
    <ligand>
        <name>(6R)-10-formyltetrahydrofolate</name>
        <dbReference type="ChEBI" id="CHEBI:195366"/>
    </ligand>
</feature>
<feature type="binding site" evidence="2">
    <location>
        <position position="541"/>
    </location>
    <ligand>
        <name>5-amino-1-(5-phospho-beta-D-ribosyl)imidazole-4-carboxamide</name>
        <dbReference type="ChEBI" id="CHEBI:58475"/>
        <note>ligand shared between dimeric partners</note>
    </ligand>
</feature>
<feature type="binding site" evidence="1">
    <location>
        <position position="546"/>
    </location>
    <ligand>
        <name>(6R)-10-formyltetrahydrofolate</name>
        <dbReference type="ChEBI" id="CHEBI:195366"/>
    </ligand>
</feature>
<feature type="binding site" evidence="1">
    <location>
        <begin position="565"/>
        <end position="566"/>
    </location>
    <ligand>
        <name>(6R)-10-formyltetrahydrofolate</name>
        <dbReference type="ChEBI" id="CHEBI:195366"/>
    </ligand>
</feature>
<feature type="binding site" evidence="2">
    <location>
        <position position="588"/>
    </location>
    <ligand>
        <name>5-amino-1-(5-phospho-beta-D-ribosyl)imidazole-4-carboxamide</name>
        <dbReference type="ChEBI" id="CHEBI:58475"/>
        <note>ligand shared between dimeric partners</note>
    </ligand>
</feature>
<feature type="site" description="Transition state stabilizer" evidence="2">
    <location>
        <position position="266"/>
    </location>
</feature>
<feature type="sequence conflict" description="In Ref. 3; AA sequence." evidence="9" ref="3">
    <original>R</original>
    <variation>A</variation>
    <location>
        <position position="389"/>
    </location>
</feature>
<proteinExistence type="evidence at protein level"/>
<gene>
    <name evidence="8" type="primary">ADE17</name>
    <name type="ordered locus">YMR120C</name>
    <name type="ORF">YM8564.02C</name>
</gene>
<dbReference type="EC" id="2.1.2.3" evidence="4 10 11"/>
<dbReference type="EC" id="3.5.4.10" evidence="4 11"/>
<dbReference type="EMBL" id="Z49273">
    <property type="protein sequence ID" value="CAA89269.1"/>
    <property type="molecule type" value="Genomic_DNA"/>
</dbReference>
<dbReference type="EMBL" id="BK006946">
    <property type="protein sequence ID" value="DAA10017.1"/>
    <property type="molecule type" value="Genomic_DNA"/>
</dbReference>
<dbReference type="PIR" id="S54489">
    <property type="entry name" value="S54489"/>
</dbReference>
<dbReference type="RefSeq" id="NP_013839.1">
    <property type="nucleotide sequence ID" value="NM_001182621.1"/>
</dbReference>
<dbReference type="SMR" id="P38009"/>
<dbReference type="BioGRID" id="35297">
    <property type="interactions" value="131"/>
</dbReference>
<dbReference type="DIP" id="DIP-6288N"/>
<dbReference type="FunCoup" id="P38009">
    <property type="interactions" value="1220"/>
</dbReference>
<dbReference type="IntAct" id="P38009">
    <property type="interactions" value="40"/>
</dbReference>
<dbReference type="MINT" id="P38009"/>
<dbReference type="STRING" id="4932.YMR120C"/>
<dbReference type="iPTMnet" id="P38009"/>
<dbReference type="PaxDb" id="4932-YMR120C"/>
<dbReference type="PeptideAtlas" id="P38009"/>
<dbReference type="EnsemblFungi" id="YMR120C_mRNA">
    <property type="protein sequence ID" value="YMR120C"/>
    <property type="gene ID" value="YMR120C"/>
</dbReference>
<dbReference type="GeneID" id="855149"/>
<dbReference type="KEGG" id="sce:YMR120C"/>
<dbReference type="AGR" id="SGD:S000004727"/>
<dbReference type="SGD" id="S000004727">
    <property type="gene designation" value="ADE17"/>
</dbReference>
<dbReference type="VEuPathDB" id="FungiDB:YMR120C"/>
<dbReference type="eggNOG" id="KOG2555">
    <property type="taxonomic scope" value="Eukaryota"/>
</dbReference>
<dbReference type="GeneTree" id="ENSGT00390000004553"/>
<dbReference type="HOGENOM" id="CLU_016316_3_2_1"/>
<dbReference type="InParanoid" id="P38009"/>
<dbReference type="OMA" id="IKHNNPC"/>
<dbReference type="OrthoDB" id="6017153at2759"/>
<dbReference type="BioCyc" id="MetaCyc:YMR120C-MONOMER"/>
<dbReference type="BioCyc" id="YEAST:YMR120C-MONOMER"/>
<dbReference type="Reactome" id="R-SCE-73817">
    <property type="pathway name" value="Purine ribonucleoside monophosphate biosynthesis"/>
</dbReference>
<dbReference type="UniPathway" id="UPA00074">
    <property type="reaction ID" value="UER00133"/>
</dbReference>
<dbReference type="UniPathway" id="UPA00074">
    <property type="reaction ID" value="UER00135"/>
</dbReference>
<dbReference type="BioGRID-ORCS" id="855149">
    <property type="hits" value="4 hits in 10 CRISPR screens"/>
</dbReference>
<dbReference type="CD-CODE" id="E03F929F">
    <property type="entry name" value="Stress granule"/>
</dbReference>
<dbReference type="PRO" id="PR:P38009"/>
<dbReference type="Proteomes" id="UP000002311">
    <property type="component" value="Chromosome XIII"/>
</dbReference>
<dbReference type="RNAct" id="P38009">
    <property type="molecule type" value="protein"/>
</dbReference>
<dbReference type="GO" id="GO:0005829">
    <property type="term" value="C:cytosol"/>
    <property type="evidence" value="ECO:0000314"/>
    <property type="project" value="SGD"/>
</dbReference>
<dbReference type="GO" id="GO:0005886">
    <property type="term" value="C:plasma membrane"/>
    <property type="evidence" value="ECO:0007005"/>
    <property type="project" value="SGD"/>
</dbReference>
<dbReference type="GO" id="GO:0003937">
    <property type="term" value="F:IMP cyclohydrolase activity"/>
    <property type="evidence" value="ECO:0000314"/>
    <property type="project" value="SGD"/>
</dbReference>
<dbReference type="GO" id="GO:0004643">
    <property type="term" value="F:phosphoribosylaminoimidazolecarboxamide formyltransferase activity"/>
    <property type="evidence" value="ECO:0000314"/>
    <property type="project" value="SGD"/>
</dbReference>
<dbReference type="GO" id="GO:0006189">
    <property type="term" value="P:'de novo' IMP biosynthetic process"/>
    <property type="evidence" value="ECO:0000314"/>
    <property type="project" value="SGD"/>
</dbReference>
<dbReference type="GO" id="GO:0006164">
    <property type="term" value="P:purine nucleotide biosynthetic process"/>
    <property type="evidence" value="ECO:0000314"/>
    <property type="project" value="SGD"/>
</dbReference>
<dbReference type="CDD" id="cd01421">
    <property type="entry name" value="IMPCH"/>
    <property type="match status" value="1"/>
</dbReference>
<dbReference type="FunFam" id="3.40.140.20:FF:000003">
    <property type="entry name" value="Bifunctional purine biosynthesis protein"/>
    <property type="match status" value="1"/>
</dbReference>
<dbReference type="FunFam" id="3.40.50.1380:FF:000003">
    <property type="entry name" value="Bifunctional purine biosynthesis protein"/>
    <property type="match status" value="1"/>
</dbReference>
<dbReference type="FunFam" id="1.10.287.440:FF:000001">
    <property type="entry name" value="Bifunctional purine biosynthesis protein PURH"/>
    <property type="match status" value="1"/>
</dbReference>
<dbReference type="Gene3D" id="1.10.287.440">
    <property type="match status" value="1"/>
</dbReference>
<dbReference type="Gene3D" id="3.40.140.20">
    <property type="match status" value="2"/>
</dbReference>
<dbReference type="Gene3D" id="3.40.50.1380">
    <property type="entry name" value="Methylglyoxal synthase-like domain"/>
    <property type="match status" value="1"/>
</dbReference>
<dbReference type="HAMAP" id="MF_00139">
    <property type="entry name" value="PurH"/>
    <property type="match status" value="1"/>
</dbReference>
<dbReference type="InterPro" id="IPR024051">
    <property type="entry name" value="AICAR_Tfase_dup_dom_sf"/>
</dbReference>
<dbReference type="InterPro" id="IPR024050">
    <property type="entry name" value="AICAR_Tfase_insert_dom_sf"/>
</dbReference>
<dbReference type="InterPro" id="IPR016193">
    <property type="entry name" value="Cytidine_deaminase-like"/>
</dbReference>
<dbReference type="InterPro" id="IPR011607">
    <property type="entry name" value="MGS-like_dom"/>
</dbReference>
<dbReference type="InterPro" id="IPR036914">
    <property type="entry name" value="MGS-like_dom_sf"/>
</dbReference>
<dbReference type="InterPro" id="IPR002695">
    <property type="entry name" value="PurH-like"/>
</dbReference>
<dbReference type="NCBIfam" id="NF005492">
    <property type="entry name" value="PRK07106.1"/>
    <property type="match status" value="1"/>
</dbReference>
<dbReference type="NCBIfam" id="TIGR00355">
    <property type="entry name" value="purH"/>
    <property type="match status" value="1"/>
</dbReference>
<dbReference type="PANTHER" id="PTHR11692:SF0">
    <property type="entry name" value="BIFUNCTIONAL PURINE BIOSYNTHESIS PROTEIN ATIC"/>
    <property type="match status" value="1"/>
</dbReference>
<dbReference type="PANTHER" id="PTHR11692">
    <property type="entry name" value="BIFUNCTIONAL PURINE BIOSYNTHESIS PROTEIN PURH"/>
    <property type="match status" value="1"/>
</dbReference>
<dbReference type="Pfam" id="PF01808">
    <property type="entry name" value="AICARFT_IMPCHas"/>
    <property type="match status" value="1"/>
</dbReference>
<dbReference type="Pfam" id="PF02142">
    <property type="entry name" value="MGS"/>
    <property type="match status" value="1"/>
</dbReference>
<dbReference type="PIRSF" id="PIRSF000414">
    <property type="entry name" value="AICARFT_IMPCHas"/>
    <property type="match status" value="1"/>
</dbReference>
<dbReference type="SMART" id="SM00798">
    <property type="entry name" value="AICARFT_IMPCHas"/>
    <property type="match status" value="1"/>
</dbReference>
<dbReference type="SMART" id="SM00851">
    <property type="entry name" value="MGS"/>
    <property type="match status" value="1"/>
</dbReference>
<dbReference type="SUPFAM" id="SSF53927">
    <property type="entry name" value="Cytidine deaminase-like"/>
    <property type="match status" value="1"/>
</dbReference>
<dbReference type="SUPFAM" id="SSF52335">
    <property type="entry name" value="Methylglyoxal synthase-like"/>
    <property type="match status" value="1"/>
</dbReference>
<dbReference type="PROSITE" id="PS51855">
    <property type="entry name" value="MGS"/>
    <property type="match status" value="1"/>
</dbReference>
<protein>
    <recommendedName>
        <fullName>Bifunctional purine biosynthesis protein ADE17</fullName>
    </recommendedName>
    <domain>
        <recommendedName>
            <fullName>Phosphoribosylaminoimidazolecarboxamide formyltransferase</fullName>
            <ecNumber evidence="4 10 11">2.1.2.3</ecNumber>
        </recommendedName>
        <alternativeName>
            <fullName evidence="8">5-aminoimidazole-4-carboxamide ribonucleotide formyltransferase</fullName>
        </alternativeName>
        <alternativeName>
            <fullName evidence="8">AICAR transformylase</fullName>
        </alternativeName>
    </domain>
    <domain>
        <recommendedName>
            <fullName evidence="9">Inosine 5'-monophosphate cyclohydrolase</fullName>
            <shortName evidence="8">IMP cyclohydrolase</shortName>
            <ecNumber evidence="4 11">3.5.4.10</ecNumber>
        </recommendedName>
        <alternativeName>
            <fullName evidence="7">ATIC</fullName>
        </alternativeName>
        <alternativeName>
            <fullName>IMP synthase</fullName>
        </alternativeName>
        <alternativeName>
            <fullName>Inosinicase</fullName>
        </alternativeName>
    </domain>
</protein>
<sequence>MANYTKTAILSVYDKTGLLDLARGLIEKNVRILASGGTARMIRDAGFPIEDVSAITHAPEMLGGRVKTLHPAVHGGILARDIDSDEKDLKEQHIEKVDYVVCNLYPFKETVAKVGVTIPEAVEEIDIGGVTLLRAAAKNHARVTILSDPKDYSEFLSELSSNGEISQDLRNRLALKAFEHTADYDAAISDFFRKQYSEGQAQITLRYGANPHQKPAQAYVSQQDSLPFKVLCGSPGYINLLDALNSWPLVKELSASLNLPAAASFKHVSPAGAAVGIPLSDVEKQVYFVADIENLSPLACAYARARGADRMSSFGDWIALSNIVDVPTAKIISREVSDGVIAPGYEPEALAILSKKKGGKYCILQIDPNYVPEAVERRQVYGVTLEQKRNDAIINQSTFKEIVSQNKNLTEQAIIDLTVATIAIKYTQSNSVCYARNGMVVGLGAGQQSRIHCTRLAGDKADNWWFRQHPRVLEIKWAKGVKRPEKSNAIDLFVTGQIPTEEPELSEYQSKFEEIPKPFTPEERKEWLSKLTNVSLSSDAFFPFPDNVYRAVKSGVKYIAAPSGSVMDKVVFSAADSFDLVYVENPIRLFHH</sequence>
<reference key="1">
    <citation type="journal article" date="1997" name="Nature">
        <title>The nucleotide sequence of Saccharomyces cerevisiae chromosome XIII.</title>
        <authorList>
            <person name="Bowman S."/>
            <person name="Churcher C.M."/>
            <person name="Badcock K."/>
            <person name="Brown D."/>
            <person name="Chillingworth T."/>
            <person name="Connor R."/>
            <person name="Dedman K."/>
            <person name="Devlin K."/>
            <person name="Gentles S."/>
            <person name="Hamlin N."/>
            <person name="Hunt S."/>
            <person name="Jagels K."/>
            <person name="Lye G."/>
            <person name="Moule S."/>
            <person name="Odell C."/>
            <person name="Pearson D."/>
            <person name="Rajandream M.A."/>
            <person name="Rice P."/>
            <person name="Skelton J."/>
            <person name="Walsh S.V."/>
            <person name="Whitehead S."/>
            <person name="Barrell B.G."/>
        </authorList>
    </citation>
    <scope>NUCLEOTIDE SEQUENCE [LARGE SCALE GENOMIC DNA]</scope>
    <source>
        <strain>ATCC 204508 / S288c</strain>
    </source>
</reference>
<reference key="2">
    <citation type="journal article" date="2014" name="G3 (Bethesda)">
        <title>The reference genome sequence of Saccharomyces cerevisiae: Then and now.</title>
        <authorList>
            <person name="Engel S.R."/>
            <person name="Dietrich F.S."/>
            <person name="Fisk D.G."/>
            <person name="Binkley G."/>
            <person name="Balakrishnan R."/>
            <person name="Costanzo M.C."/>
            <person name="Dwight S.S."/>
            <person name="Hitz B.C."/>
            <person name="Karra K."/>
            <person name="Nash R.S."/>
            <person name="Weng S."/>
            <person name="Wong E.D."/>
            <person name="Lloyd P."/>
            <person name="Skrzypek M.S."/>
            <person name="Miyasato S.R."/>
            <person name="Simison M."/>
            <person name="Cherry J.M."/>
        </authorList>
    </citation>
    <scope>GENOME REANNOTATION</scope>
    <source>
        <strain>ATCC 204508 / S288c</strain>
    </source>
</reference>
<reference key="3">
    <citation type="journal article" date="1994" name="Electrophoresis">
        <title>Protein identifications for a Saccharomyces cerevisiae protein database.</title>
        <authorList>
            <person name="Garrels J.I."/>
            <person name="Futcher B."/>
            <person name="Kobayashi R."/>
            <person name="Latter G.I."/>
            <person name="Schwender B."/>
            <person name="Volpe T."/>
            <person name="Warner J.R."/>
            <person name="McLaughlin C.S."/>
        </authorList>
    </citation>
    <scope>PROTEIN SEQUENCE OF 140-150 AND 389-400</scope>
    <source>
        <strain>ATCC 204508 / S288c</strain>
    </source>
</reference>
<reference key="4">
    <citation type="journal article" date="1997" name="Arch. Biochem. Biophys.">
        <title>Saccharomyces cerevisiae expresses two genes encoding isozymes of 5-aminoimidazole-4-carboxamide ribonucleotide transformylase.</title>
        <authorList>
            <person name="Tibbetts A.S."/>
            <person name="Appling D.R."/>
        </authorList>
    </citation>
    <scope>FUNCTION</scope>
    <scope>CATALYTIC ACTIVITY</scope>
    <scope>PATHWAY</scope>
    <scope>DISRUPTION PHENOTYPE</scope>
</reference>
<reference key="5">
    <citation type="journal article" date="2000" name="J. Biol. Chem.">
        <title>Characterization of two 5-aminoimidazole-4-carboxamide ribonucleotide transformylase/inosine monophosphate cyclohydrolase isozymes from Saccharomyces cerevisiae.</title>
        <authorList>
            <person name="Tibbetts A.S."/>
            <person name="Appling D.R."/>
        </authorList>
    </citation>
    <scope>FUNCTION</scope>
    <scope>CATALYTIC ACTIVITY</scope>
    <scope>BIOPHYSICOCHEMICAL PROPERTIES</scope>
    <scope>PATHWAY</scope>
    <scope>SUBUNIT</scope>
    <scope>SUBCELLULAR LOCATION</scope>
    <scope>INDUCTION</scope>
    <scope>DISRUPTION PHENOTYPE</scope>
</reference>
<reference key="6">
    <citation type="journal article" date="2003" name="Nature">
        <title>Global analysis of protein expression in yeast.</title>
        <authorList>
            <person name="Ghaemmaghami S."/>
            <person name="Huh W.-K."/>
            <person name="Bower K."/>
            <person name="Howson R.W."/>
            <person name="Belle A."/>
            <person name="Dephoure N."/>
            <person name="O'Shea E.K."/>
            <person name="Weissman J.S."/>
        </authorList>
    </citation>
    <scope>LEVEL OF PROTEIN EXPRESSION [LARGE SCALE ANALYSIS]</scope>
</reference>
<reference key="7">
    <citation type="journal article" date="2012" name="Proc. Natl. Acad. Sci. U.S.A.">
        <title>N-terminal acetylome analyses and functional insights of the N-terminal acetyltransferase NatB.</title>
        <authorList>
            <person name="Van Damme P."/>
            <person name="Lasa M."/>
            <person name="Polevoda B."/>
            <person name="Gazquez C."/>
            <person name="Elosegui-Artola A."/>
            <person name="Kim D.S."/>
            <person name="De Juan-Pardo E."/>
            <person name="Demeyer K."/>
            <person name="Hole K."/>
            <person name="Larrea E."/>
            <person name="Timmerman E."/>
            <person name="Prieto J."/>
            <person name="Arnesen T."/>
            <person name="Sherman F."/>
            <person name="Gevaert K."/>
            <person name="Aldabe R."/>
        </authorList>
    </citation>
    <scope>IDENTIFICATION BY MASS SPECTROMETRY [LARGE SCALE ANALYSIS]</scope>
</reference>